<evidence type="ECO:0000255" key="1">
    <source>
        <dbReference type="HAMAP-Rule" id="MF_01420"/>
    </source>
</evidence>
<name>WHIA_BACC0</name>
<gene>
    <name evidence="1" type="primary">whiA</name>
    <name type="ordered locus">BCAH820_5238</name>
</gene>
<keyword id="KW-0131">Cell cycle</keyword>
<keyword id="KW-0132">Cell division</keyword>
<keyword id="KW-0238">DNA-binding</keyword>
<protein>
    <recommendedName>
        <fullName evidence="1">Probable cell division protein WhiA</fullName>
    </recommendedName>
</protein>
<dbReference type="EMBL" id="CP001283">
    <property type="protein sequence ID" value="ACK87451.1"/>
    <property type="molecule type" value="Genomic_DNA"/>
</dbReference>
<dbReference type="RefSeq" id="WP_000006561.1">
    <property type="nucleotide sequence ID" value="NC_011773.1"/>
</dbReference>
<dbReference type="SMR" id="B7JFI0"/>
<dbReference type="GeneID" id="75088327"/>
<dbReference type="KEGG" id="bcu:BCAH820_5238"/>
<dbReference type="HOGENOM" id="CLU_053282_0_0_9"/>
<dbReference type="Proteomes" id="UP000001363">
    <property type="component" value="Chromosome"/>
</dbReference>
<dbReference type="GO" id="GO:0003677">
    <property type="term" value="F:DNA binding"/>
    <property type="evidence" value="ECO:0007669"/>
    <property type="project" value="UniProtKB-UniRule"/>
</dbReference>
<dbReference type="GO" id="GO:0051301">
    <property type="term" value="P:cell division"/>
    <property type="evidence" value="ECO:0007669"/>
    <property type="project" value="UniProtKB-UniRule"/>
</dbReference>
<dbReference type="GO" id="GO:0043937">
    <property type="term" value="P:regulation of sporulation"/>
    <property type="evidence" value="ECO:0007669"/>
    <property type="project" value="InterPro"/>
</dbReference>
<dbReference type="FunFam" id="3.10.28.10:FF:000002">
    <property type="entry name" value="Probable cell division protein WhiA"/>
    <property type="match status" value="1"/>
</dbReference>
<dbReference type="Gene3D" id="3.10.28.10">
    <property type="entry name" value="Homing endonucleases"/>
    <property type="match status" value="1"/>
</dbReference>
<dbReference type="HAMAP" id="MF_01420">
    <property type="entry name" value="HTH_type_WhiA"/>
    <property type="match status" value="1"/>
</dbReference>
<dbReference type="InterPro" id="IPR027434">
    <property type="entry name" value="Homing_endonucl"/>
</dbReference>
<dbReference type="InterPro" id="IPR018478">
    <property type="entry name" value="Sporu_reg_WhiA_N_dom"/>
</dbReference>
<dbReference type="InterPro" id="IPR003802">
    <property type="entry name" value="Sporulation_regulator_WhiA"/>
</dbReference>
<dbReference type="InterPro" id="IPR023054">
    <property type="entry name" value="Sporulation_regulator_WhiA_C"/>
</dbReference>
<dbReference type="InterPro" id="IPR039518">
    <property type="entry name" value="WhiA_LAGLIDADG_dom"/>
</dbReference>
<dbReference type="NCBIfam" id="TIGR00647">
    <property type="entry name" value="DNA_bind_WhiA"/>
    <property type="match status" value="1"/>
</dbReference>
<dbReference type="PANTHER" id="PTHR37307">
    <property type="entry name" value="CELL DIVISION PROTEIN WHIA-RELATED"/>
    <property type="match status" value="1"/>
</dbReference>
<dbReference type="PANTHER" id="PTHR37307:SF1">
    <property type="entry name" value="CELL DIVISION PROTEIN WHIA-RELATED"/>
    <property type="match status" value="1"/>
</dbReference>
<dbReference type="Pfam" id="PF02650">
    <property type="entry name" value="HTH_WhiA"/>
    <property type="match status" value="1"/>
</dbReference>
<dbReference type="Pfam" id="PF14527">
    <property type="entry name" value="LAGLIDADG_WhiA"/>
    <property type="match status" value="1"/>
</dbReference>
<dbReference type="Pfam" id="PF10298">
    <property type="entry name" value="WhiA_N"/>
    <property type="match status" value="1"/>
</dbReference>
<dbReference type="SUPFAM" id="SSF55608">
    <property type="entry name" value="Homing endonucleases"/>
    <property type="match status" value="1"/>
</dbReference>
<proteinExistence type="inferred from homology"/>
<accession>B7JFI0</accession>
<organism>
    <name type="scientific">Bacillus cereus (strain AH820)</name>
    <dbReference type="NCBI Taxonomy" id="405535"/>
    <lineage>
        <taxon>Bacteria</taxon>
        <taxon>Bacillati</taxon>
        <taxon>Bacillota</taxon>
        <taxon>Bacilli</taxon>
        <taxon>Bacillales</taxon>
        <taxon>Bacillaceae</taxon>
        <taxon>Bacillus</taxon>
        <taxon>Bacillus cereus group</taxon>
    </lineage>
</organism>
<reference key="1">
    <citation type="submission" date="2008-10" db="EMBL/GenBank/DDBJ databases">
        <title>Genome sequence of Bacillus cereus AH820.</title>
        <authorList>
            <person name="Dodson R.J."/>
            <person name="Durkin A.S."/>
            <person name="Rosovitz M.J."/>
            <person name="Rasko D.A."/>
            <person name="Hoffmaster A."/>
            <person name="Ravel J."/>
            <person name="Sutton G."/>
        </authorList>
    </citation>
    <scope>NUCLEOTIDE SEQUENCE [LARGE SCALE GENOMIC DNA]</scope>
    <source>
        <strain>AH820</strain>
    </source>
</reference>
<feature type="chain" id="PRO_0000376430" description="Probable cell division protein WhiA">
    <location>
        <begin position="1"/>
        <end position="316"/>
    </location>
</feature>
<feature type="DNA-binding region" description="H-T-H motif" evidence="1">
    <location>
        <begin position="275"/>
        <end position="309"/>
    </location>
</feature>
<comment type="function">
    <text evidence="1">Involved in cell division and chromosome segregation.</text>
</comment>
<comment type="similarity">
    <text evidence="1">Belongs to the WhiA family.</text>
</comment>
<sequence>MSFASETKKELTNLEMKECCEKAELSALLRMNGSLSFSNRRLSIDIQTENAAIARRIYTLLKKGYDVTVELLVRKKMRLKKNNVYIVRLVEKSREILADLHIVRDDFSFIRNISQELIEKKCCKRSYLRGAFLAGGSVNNPETSSYHLEIFSLYKEHNDAICELMNGFDLNSKTLERRKGYITYLKEAEKITEFLNIIGAHNALLRFEDIRIVRDMRNSVNRLVNCETANLNKTIGAALRQIENIRYIDETVGLDILPDKLREIAQLRRDYQDVTLKELGEMVSGGKISKSGINHRLRKIDDIAEKLRAGETVAKK</sequence>